<sequence>MEFSVQSSTIEQLQTECLIVGVYQDHQLSSAAVQLDQVSGGYLTRLLQMGDLDGSVGQSLLLHNVPNIKSARVLLVGCGKQDELTESQYKKIMQQMMHAINATAVQQAVCFLTELMVKQRTIYWNIRFAIESIQASRYVYDVFKSIKAKVVGKLTQIIFNVANQQDLLEAERGLKHAQAIASGMIYAKNMANCPPNICNPAYLAELAQGLATDYQQIQTRIVDEAEMATLGMNAYLAVSQGSHNPAFLSVIEYNHHPDPSAKPIVLVGKGLTFDAGGISLKPSDAMDEMKYDMGGAAAVYGTMKALAEMQLPLNVVGILAGCENMPDGNAYRPGDILTTMNGLTVEVLNTDAEGRLVLCDALTYVERFDPACVIDIATLTGACMVALGTHNSGLMSTHNELADELFTAASQANDKVWRLPLGEEYQEQLKSNFADLANIGGRFGGAITAGQFLSNFTQKYRWAHLDIAGTAWQSGVAKGATGRPVPLLAQFLINRAQQE</sequence>
<gene>
    <name evidence="1" type="primary">pepA</name>
    <name type="ordered locus">HD_0555</name>
</gene>
<accession>Q7VNH9</accession>
<reference key="1">
    <citation type="submission" date="2003-06" db="EMBL/GenBank/DDBJ databases">
        <title>The complete genome sequence of Haemophilus ducreyi.</title>
        <authorList>
            <person name="Munson R.S. Jr."/>
            <person name="Ray W.C."/>
            <person name="Mahairas G."/>
            <person name="Sabo P."/>
            <person name="Mungur R."/>
            <person name="Johnson L."/>
            <person name="Nguyen D."/>
            <person name="Wang J."/>
            <person name="Forst C."/>
            <person name="Hood L."/>
        </authorList>
    </citation>
    <scope>NUCLEOTIDE SEQUENCE [LARGE SCALE GENOMIC DNA]</scope>
    <source>
        <strain>35000HP / ATCC 700724</strain>
    </source>
</reference>
<organism>
    <name type="scientific">Haemophilus ducreyi (strain 35000HP / ATCC 700724)</name>
    <dbReference type="NCBI Taxonomy" id="233412"/>
    <lineage>
        <taxon>Bacteria</taxon>
        <taxon>Pseudomonadati</taxon>
        <taxon>Pseudomonadota</taxon>
        <taxon>Gammaproteobacteria</taxon>
        <taxon>Pasteurellales</taxon>
        <taxon>Pasteurellaceae</taxon>
        <taxon>Haemophilus</taxon>
    </lineage>
</organism>
<name>AMPA_HAEDU</name>
<protein>
    <recommendedName>
        <fullName evidence="1">Probable cytosol aminopeptidase</fullName>
        <ecNumber evidence="1">3.4.11.1</ecNumber>
    </recommendedName>
    <alternativeName>
        <fullName evidence="1">Leucine aminopeptidase</fullName>
        <shortName evidence="1">LAP</shortName>
        <ecNumber evidence="1">3.4.11.10</ecNumber>
    </alternativeName>
    <alternativeName>
        <fullName evidence="1">Leucyl aminopeptidase</fullName>
    </alternativeName>
</protein>
<feature type="chain" id="PRO_0000165757" description="Probable cytosol aminopeptidase">
    <location>
        <begin position="1"/>
        <end position="499"/>
    </location>
</feature>
<feature type="active site" evidence="1">
    <location>
        <position position="281"/>
    </location>
</feature>
<feature type="active site" evidence="1">
    <location>
        <position position="355"/>
    </location>
</feature>
<feature type="binding site" evidence="1">
    <location>
        <position position="269"/>
    </location>
    <ligand>
        <name>Mn(2+)</name>
        <dbReference type="ChEBI" id="CHEBI:29035"/>
        <label>2</label>
    </ligand>
</feature>
<feature type="binding site" evidence="1">
    <location>
        <position position="274"/>
    </location>
    <ligand>
        <name>Mn(2+)</name>
        <dbReference type="ChEBI" id="CHEBI:29035"/>
        <label>1</label>
    </ligand>
</feature>
<feature type="binding site" evidence="1">
    <location>
        <position position="274"/>
    </location>
    <ligand>
        <name>Mn(2+)</name>
        <dbReference type="ChEBI" id="CHEBI:29035"/>
        <label>2</label>
    </ligand>
</feature>
<feature type="binding site" evidence="1">
    <location>
        <position position="292"/>
    </location>
    <ligand>
        <name>Mn(2+)</name>
        <dbReference type="ChEBI" id="CHEBI:29035"/>
        <label>2</label>
    </ligand>
</feature>
<feature type="binding site" evidence="1">
    <location>
        <position position="351"/>
    </location>
    <ligand>
        <name>Mn(2+)</name>
        <dbReference type="ChEBI" id="CHEBI:29035"/>
        <label>1</label>
    </ligand>
</feature>
<feature type="binding site" evidence="1">
    <location>
        <position position="353"/>
    </location>
    <ligand>
        <name>Mn(2+)</name>
        <dbReference type="ChEBI" id="CHEBI:29035"/>
        <label>1</label>
    </ligand>
</feature>
<feature type="binding site" evidence="1">
    <location>
        <position position="353"/>
    </location>
    <ligand>
        <name>Mn(2+)</name>
        <dbReference type="ChEBI" id="CHEBI:29035"/>
        <label>2</label>
    </ligand>
</feature>
<evidence type="ECO:0000255" key="1">
    <source>
        <dbReference type="HAMAP-Rule" id="MF_00181"/>
    </source>
</evidence>
<keyword id="KW-0031">Aminopeptidase</keyword>
<keyword id="KW-0963">Cytoplasm</keyword>
<keyword id="KW-0378">Hydrolase</keyword>
<keyword id="KW-0464">Manganese</keyword>
<keyword id="KW-0479">Metal-binding</keyword>
<keyword id="KW-0645">Protease</keyword>
<keyword id="KW-1185">Reference proteome</keyword>
<proteinExistence type="inferred from homology"/>
<comment type="function">
    <text evidence="1">Presumably involved in the processing and regular turnover of intracellular proteins. Catalyzes the removal of unsubstituted N-terminal amino acids from various peptides.</text>
</comment>
<comment type="catalytic activity">
    <reaction evidence="1">
        <text>Release of an N-terminal amino acid, Xaa-|-Yaa-, in which Xaa is preferably Leu, but may be other amino acids including Pro although not Arg or Lys, and Yaa may be Pro. Amino acid amides and methyl esters are also readily hydrolyzed, but rates on arylamides are exceedingly low.</text>
        <dbReference type="EC" id="3.4.11.1"/>
    </reaction>
</comment>
<comment type="catalytic activity">
    <reaction evidence="1">
        <text>Release of an N-terminal amino acid, preferentially leucine, but not glutamic or aspartic acids.</text>
        <dbReference type="EC" id="3.4.11.10"/>
    </reaction>
</comment>
<comment type="cofactor">
    <cofactor evidence="1">
        <name>Mn(2+)</name>
        <dbReference type="ChEBI" id="CHEBI:29035"/>
    </cofactor>
    <text evidence="1">Binds 2 manganese ions per subunit.</text>
</comment>
<comment type="subcellular location">
    <subcellularLocation>
        <location evidence="1">Cytoplasm</location>
    </subcellularLocation>
</comment>
<comment type="similarity">
    <text evidence="1">Belongs to the peptidase M17 family.</text>
</comment>
<dbReference type="EC" id="3.4.11.1" evidence="1"/>
<dbReference type="EC" id="3.4.11.10" evidence="1"/>
<dbReference type="EMBL" id="AE017143">
    <property type="protein sequence ID" value="AAP95491.1"/>
    <property type="molecule type" value="Genomic_DNA"/>
</dbReference>
<dbReference type="RefSeq" id="WP_010944544.1">
    <property type="nucleotide sequence ID" value="NC_002940.2"/>
</dbReference>
<dbReference type="SMR" id="Q7VNH9"/>
<dbReference type="STRING" id="233412.HD_0555"/>
<dbReference type="MEROPS" id="M17.003"/>
<dbReference type="KEGG" id="hdu:HD_0555"/>
<dbReference type="eggNOG" id="COG0260">
    <property type="taxonomic scope" value="Bacteria"/>
</dbReference>
<dbReference type="HOGENOM" id="CLU_013734_2_2_6"/>
<dbReference type="OrthoDB" id="9809354at2"/>
<dbReference type="Proteomes" id="UP000001022">
    <property type="component" value="Chromosome"/>
</dbReference>
<dbReference type="GO" id="GO:0005737">
    <property type="term" value="C:cytoplasm"/>
    <property type="evidence" value="ECO:0007669"/>
    <property type="project" value="UniProtKB-SubCell"/>
</dbReference>
<dbReference type="GO" id="GO:0030145">
    <property type="term" value="F:manganese ion binding"/>
    <property type="evidence" value="ECO:0007669"/>
    <property type="project" value="UniProtKB-UniRule"/>
</dbReference>
<dbReference type="GO" id="GO:0070006">
    <property type="term" value="F:metalloaminopeptidase activity"/>
    <property type="evidence" value="ECO:0007669"/>
    <property type="project" value="InterPro"/>
</dbReference>
<dbReference type="GO" id="GO:0006508">
    <property type="term" value="P:proteolysis"/>
    <property type="evidence" value="ECO:0007669"/>
    <property type="project" value="UniProtKB-KW"/>
</dbReference>
<dbReference type="CDD" id="cd00433">
    <property type="entry name" value="Peptidase_M17"/>
    <property type="match status" value="1"/>
</dbReference>
<dbReference type="FunFam" id="3.40.630.10:FF:000004">
    <property type="entry name" value="Probable cytosol aminopeptidase"/>
    <property type="match status" value="1"/>
</dbReference>
<dbReference type="Gene3D" id="3.40.220.10">
    <property type="entry name" value="Leucine Aminopeptidase, subunit E, domain 1"/>
    <property type="match status" value="1"/>
</dbReference>
<dbReference type="Gene3D" id="3.40.630.10">
    <property type="entry name" value="Zn peptidases"/>
    <property type="match status" value="1"/>
</dbReference>
<dbReference type="HAMAP" id="MF_00181">
    <property type="entry name" value="Cytosol_peptidase_M17"/>
    <property type="match status" value="1"/>
</dbReference>
<dbReference type="InterPro" id="IPR011356">
    <property type="entry name" value="Leucine_aapep/pepB"/>
</dbReference>
<dbReference type="InterPro" id="IPR043472">
    <property type="entry name" value="Macro_dom-like"/>
</dbReference>
<dbReference type="InterPro" id="IPR000819">
    <property type="entry name" value="Peptidase_M17_C"/>
</dbReference>
<dbReference type="InterPro" id="IPR023042">
    <property type="entry name" value="Peptidase_M17_leu_NH2_pept"/>
</dbReference>
<dbReference type="InterPro" id="IPR008283">
    <property type="entry name" value="Peptidase_M17_N"/>
</dbReference>
<dbReference type="NCBIfam" id="NF002073">
    <property type="entry name" value="PRK00913.1-2"/>
    <property type="match status" value="1"/>
</dbReference>
<dbReference type="NCBIfam" id="NF002074">
    <property type="entry name" value="PRK00913.1-4"/>
    <property type="match status" value="1"/>
</dbReference>
<dbReference type="PANTHER" id="PTHR11963:SF23">
    <property type="entry name" value="CYTOSOL AMINOPEPTIDASE"/>
    <property type="match status" value="1"/>
</dbReference>
<dbReference type="PANTHER" id="PTHR11963">
    <property type="entry name" value="LEUCINE AMINOPEPTIDASE-RELATED"/>
    <property type="match status" value="1"/>
</dbReference>
<dbReference type="Pfam" id="PF00883">
    <property type="entry name" value="Peptidase_M17"/>
    <property type="match status" value="1"/>
</dbReference>
<dbReference type="Pfam" id="PF02789">
    <property type="entry name" value="Peptidase_M17_N"/>
    <property type="match status" value="1"/>
</dbReference>
<dbReference type="PRINTS" id="PR00481">
    <property type="entry name" value="LAMNOPPTDASE"/>
</dbReference>
<dbReference type="SUPFAM" id="SSF52949">
    <property type="entry name" value="Macro domain-like"/>
    <property type="match status" value="1"/>
</dbReference>
<dbReference type="SUPFAM" id="SSF53187">
    <property type="entry name" value="Zn-dependent exopeptidases"/>
    <property type="match status" value="1"/>
</dbReference>
<dbReference type="PROSITE" id="PS00631">
    <property type="entry name" value="CYTOSOL_AP"/>
    <property type="match status" value="1"/>
</dbReference>